<comment type="function">
    <text evidence="1">Prevents the cell division inhibition by proteins MinC and MinD at internal division sites while permitting inhibition at polar sites. This ensures cell division at the proper site by restricting the formation of a division septum at the midpoint of the long axis of the cell.</text>
</comment>
<comment type="similarity">
    <text evidence="1">Belongs to the MinE family.</text>
</comment>
<feature type="chain" id="PRO_0000298173" description="Cell division topological specificity factor">
    <location>
        <begin position="1"/>
        <end position="86"/>
    </location>
</feature>
<protein>
    <recommendedName>
        <fullName evidence="1">Cell division topological specificity factor</fullName>
    </recommendedName>
</protein>
<gene>
    <name evidence="1" type="primary">minE</name>
    <name type="ordered locus">RHE_PE00407</name>
</gene>
<proteinExistence type="inferred from homology"/>
<organism>
    <name type="scientific">Rhizobium etli (strain ATCC 51251 / DSM 11541 / JCM 21823 / NBRC 15573 / CFN 42)</name>
    <dbReference type="NCBI Taxonomy" id="347834"/>
    <lineage>
        <taxon>Bacteria</taxon>
        <taxon>Pseudomonadati</taxon>
        <taxon>Pseudomonadota</taxon>
        <taxon>Alphaproteobacteria</taxon>
        <taxon>Hyphomicrobiales</taxon>
        <taxon>Rhizobiaceae</taxon>
        <taxon>Rhizobium/Agrobacterium group</taxon>
        <taxon>Rhizobium</taxon>
    </lineage>
</organism>
<dbReference type="EMBL" id="CP000137">
    <property type="protein sequence ID" value="ABC93842.1"/>
    <property type="molecule type" value="Genomic_DNA"/>
</dbReference>
<dbReference type="RefSeq" id="WP_011428260.1">
    <property type="nucleotide sequence ID" value="NC_007765.1"/>
</dbReference>
<dbReference type="SMR" id="Q2JZU4"/>
<dbReference type="GeneID" id="66149352"/>
<dbReference type="KEGG" id="ret:RHE_PE00407"/>
<dbReference type="HOGENOM" id="CLU_137929_2_0_5"/>
<dbReference type="OrthoDB" id="9802655at2"/>
<dbReference type="Proteomes" id="UP000001936">
    <property type="component" value="Plasmid p42e"/>
</dbReference>
<dbReference type="GO" id="GO:0051301">
    <property type="term" value="P:cell division"/>
    <property type="evidence" value="ECO:0007669"/>
    <property type="project" value="UniProtKB-KW"/>
</dbReference>
<dbReference type="GO" id="GO:0032955">
    <property type="term" value="P:regulation of division septum assembly"/>
    <property type="evidence" value="ECO:0007669"/>
    <property type="project" value="InterPro"/>
</dbReference>
<dbReference type="Gene3D" id="3.30.1070.10">
    <property type="entry name" value="Cell division topological specificity factor MinE"/>
    <property type="match status" value="1"/>
</dbReference>
<dbReference type="HAMAP" id="MF_00262">
    <property type="entry name" value="MinE"/>
    <property type="match status" value="1"/>
</dbReference>
<dbReference type="InterPro" id="IPR005527">
    <property type="entry name" value="MinE"/>
</dbReference>
<dbReference type="InterPro" id="IPR036707">
    <property type="entry name" value="MinE_sf"/>
</dbReference>
<dbReference type="NCBIfam" id="TIGR01215">
    <property type="entry name" value="minE"/>
    <property type="match status" value="1"/>
</dbReference>
<dbReference type="NCBIfam" id="NF001422">
    <property type="entry name" value="PRK00296.1"/>
    <property type="match status" value="1"/>
</dbReference>
<dbReference type="Pfam" id="PF03776">
    <property type="entry name" value="MinE"/>
    <property type="match status" value="1"/>
</dbReference>
<dbReference type="SUPFAM" id="SSF55229">
    <property type="entry name" value="Cell division protein MinE topological specificity domain"/>
    <property type="match status" value="1"/>
</dbReference>
<geneLocation type="plasmid">
    <name>p42e</name>
</geneLocation>
<reference key="1">
    <citation type="journal article" date="2006" name="Proc. Natl. Acad. Sci. U.S.A.">
        <title>The partitioned Rhizobium etli genome: genetic and metabolic redundancy in seven interacting replicons.</title>
        <authorList>
            <person name="Gonzalez V."/>
            <person name="Santamaria R.I."/>
            <person name="Bustos P."/>
            <person name="Hernandez-Gonzalez I."/>
            <person name="Medrano-Soto A."/>
            <person name="Moreno-Hagelsieb G."/>
            <person name="Janga S.C."/>
            <person name="Ramirez M.A."/>
            <person name="Jimenez-Jacinto V."/>
            <person name="Collado-Vides J."/>
            <person name="Davila G."/>
        </authorList>
    </citation>
    <scope>NUCLEOTIDE SEQUENCE [LARGE SCALE GENOMIC DNA]</scope>
    <source>
        <strain>ATCC 51251 / DSM 11541 / JCM 21823 / NBRC 15573 / CFN 42</strain>
    </source>
</reference>
<accession>Q2JZU4</accession>
<evidence type="ECO:0000255" key="1">
    <source>
        <dbReference type="HAMAP-Rule" id="MF_00262"/>
    </source>
</evidence>
<sequence length="86" mass="9645">MNIFRLFNKQRTAPAARERLQVLLAHERSSAGSDLVSLLREEILAVIAKHVELDHDKVQVTIDRNEFVSTLEIDVEIPLNAAVQAA</sequence>
<name>MINE_RHIEC</name>
<keyword id="KW-0131">Cell cycle</keyword>
<keyword id="KW-0132">Cell division</keyword>
<keyword id="KW-0614">Plasmid</keyword>
<keyword id="KW-1185">Reference proteome</keyword>